<proteinExistence type="evidence at protein level"/>
<dbReference type="EC" id="4.3.2.10"/>
<dbReference type="EC" id="3.5.1.2"/>
<dbReference type="EMBL" id="AP008226">
    <property type="protein sequence ID" value="BAD70253.1"/>
    <property type="status" value="ALT_INIT"/>
    <property type="molecule type" value="Genomic_DNA"/>
</dbReference>
<dbReference type="RefSeq" id="YP_143696.1">
    <property type="nucleotide sequence ID" value="NC_006461.1"/>
</dbReference>
<dbReference type="PDB" id="1KA9">
    <property type="method" value="X-ray"/>
    <property type="resolution" value="2.30 A"/>
    <property type="chains" value="H=1-200"/>
</dbReference>
<dbReference type="PDBsum" id="1KA9"/>
<dbReference type="SMR" id="Q7SIC0"/>
<dbReference type="IntAct" id="Q7SIC0">
    <property type="interactions" value="1"/>
</dbReference>
<dbReference type="EnsemblBacteria" id="BAD70253">
    <property type="protein sequence ID" value="BAD70253"/>
    <property type="gene ID" value="BAD70253"/>
</dbReference>
<dbReference type="KEGG" id="ttj:TTHA0430"/>
<dbReference type="PATRIC" id="fig|300852.9.peg.430"/>
<dbReference type="eggNOG" id="COG0118">
    <property type="taxonomic scope" value="Bacteria"/>
</dbReference>
<dbReference type="HOGENOM" id="CLU_071837_2_2_0"/>
<dbReference type="BRENDA" id="4.3.2.10">
    <property type="organism ID" value="2305"/>
</dbReference>
<dbReference type="UniPathway" id="UPA00031">
    <property type="reaction ID" value="UER00010"/>
</dbReference>
<dbReference type="EvolutionaryTrace" id="Q7SIC0"/>
<dbReference type="Proteomes" id="UP000000532">
    <property type="component" value="Chromosome"/>
</dbReference>
<dbReference type="GO" id="GO:0005737">
    <property type="term" value="C:cytoplasm"/>
    <property type="evidence" value="ECO:0007669"/>
    <property type="project" value="UniProtKB-SubCell"/>
</dbReference>
<dbReference type="GO" id="GO:0004359">
    <property type="term" value="F:glutaminase activity"/>
    <property type="evidence" value="ECO:0007669"/>
    <property type="project" value="UniProtKB-EC"/>
</dbReference>
<dbReference type="GO" id="GO:0000107">
    <property type="term" value="F:imidazoleglycerol-phosphate synthase activity"/>
    <property type="evidence" value="ECO:0007669"/>
    <property type="project" value="UniProtKB-UniRule"/>
</dbReference>
<dbReference type="GO" id="GO:0016829">
    <property type="term" value="F:lyase activity"/>
    <property type="evidence" value="ECO:0007669"/>
    <property type="project" value="UniProtKB-KW"/>
</dbReference>
<dbReference type="GO" id="GO:0000105">
    <property type="term" value="P:L-histidine biosynthetic process"/>
    <property type="evidence" value="ECO:0007669"/>
    <property type="project" value="UniProtKB-UniRule"/>
</dbReference>
<dbReference type="CDD" id="cd01748">
    <property type="entry name" value="GATase1_IGP_Synthase"/>
    <property type="match status" value="1"/>
</dbReference>
<dbReference type="Gene3D" id="3.40.50.880">
    <property type="match status" value="1"/>
</dbReference>
<dbReference type="HAMAP" id="MF_00278">
    <property type="entry name" value="HisH"/>
    <property type="match status" value="1"/>
</dbReference>
<dbReference type="InterPro" id="IPR029062">
    <property type="entry name" value="Class_I_gatase-like"/>
</dbReference>
<dbReference type="InterPro" id="IPR017926">
    <property type="entry name" value="GATASE"/>
</dbReference>
<dbReference type="InterPro" id="IPR010139">
    <property type="entry name" value="Imidazole-glycPsynth_HisH"/>
</dbReference>
<dbReference type="NCBIfam" id="TIGR01855">
    <property type="entry name" value="IMP_synth_hisH"/>
    <property type="match status" value="1"/>
</dbReference>
<dbReference type="PANTHER" id="PTHR42701">
    <property type="entry name" value="IMIDAZOLE GLYCEROL PHOSPHATE SYNTHASE SUBUNIT HISH"/>
    <property type="match status" value="1"/>
</dbReference>
<dbReference type="PANTHER" id="PTHR42701:SF1">
    <property type="entry name" value="IMIDAZOLE GLYCEROL PHOSPHATE SYNTHASE SUBUNIT HISH"/>
    <property type="match status" value="1"/>
</dbReference>
<dbReference type="Pfam" id="PF00117">
    <property type="entry name" value="GATase"/>
    <property type="match status" value="1"/>
</dbReference>
<dbReference type="PIRSF" id="PIRSF000495">
    <property type="entry name" value="Amidotransf_hisH"/>
    <property type="match status" value="1"/>
</dbReference>
<dbReference type="SUPFAM" id="SSF52317">
    <property type="entry name" value="Class I glutamine amidotransferase-like"/>
    <property type="match status" value="1"/>
</dbReference>
<dbReference type="PROSITE" id="PS51273">
    <property type="entry name" value="GATASE_TYPE_1"/>
    <property type="match status" value="1"/>
</dbReference>
<keyword id="KW-0002">3D-structure</keyword>
<keyword id="KW-0028">Amino-acid biosynthesis</keyword>
<keyword id="KW-0963">Cytoplasm</keyword>
<keyword id="KW-0315">Glutamine amidotransferase</keyword>
<keyword id="KW-0368">Histidine biosynthesis</keyword>
<keyword id="KW-0378">Hydrolase</keyword>
<keyword id="KW-0456">Lyase</keyword>
<keyword id="KW-1185">Reference proteome</keyword>
<organism>
    <name type="scientific">Thermus thermophilus (strain ATCC 27634 / DSM 579 / HB8)</name>
    <dbReference type="NCBI Taxonomy" id="300852"/>
    <lineage>
        <taxon>Bacteria</taxon>
        <taxon>Thermotogati</taxon>
        <taxon>Deinococcota</taxon>
        <taxon>Deinococci</taxon>
        <taxon>Thermales</taxon>
        <taxon>Thermaceae</taxon>
        <taxon>Thermus</taxon>
    </lineage>
</organism>
<evidence type="ECO:0000250" key="1"/>
<evidence type="ECO:0000269" key="2">
    <source>
    </source>
</evidence>
<evidence type="ECO:0000305" key="3"/>
<evidence type="ECO:0007829" key="4">
    <source>
        <dbReference type="PDB" id="1KA9"/>
    </source>
</evidence>
<accession>Q7SIC0</accession>
<accession>Q5SL63</accession>
<gene>
    <name type="primary">hisH</name>
    <name type="ordered locus">TTHA0430</name>
</gene>
<sequence>MRMKALLIDYGSGNLRSAAKALEAAGFSVAVAQDPKAHEEADLLVLPGQGHFGQVMRAFQESGFVERVRRHLERGLPFLGICVGMQVLYEGSEEAPGVRGLGLVPGEVRRFRAGRVPQMGWNALEFGGAFAPLTGRHFYFANSYYGPLTPYSLGKGEYEGTPFTALLAKENLLAPQFHPEKSGKAGLAFLALARRYFEVL</sequence>
<name>HIS5_THET8</name>
<reference key="1">
    <citation type="submission" date="2004-11" db="EMBL/GenBank/DDBJ databases">
        <title>Complete genome sequence of Thermus thermophilus HB8.</title>
        <authorList>
            <person name="Masui R."/>
            <person name="Kurokawa K."/>
            <person name="Nakagawa N."/>
            <person name="Tokunaga F."/>
            <person name="Koyama Y."/>
            <person name="Shibata T."/>
            <person name="Oshima T."/>
            <person name="Yokoyama S."/>
            <person name="Yasunaga T."/>
            <person name="Kuramitsu S."/>
        </authorList>
    </citation>
    <scope>NUCLEOTIDE SEQUENCE [LARGE SCALE GENOMIC DNA]</scope>
    <source>
        <strain>ATCC 27634 / DSM 579 / HB8</strain>
    </source>
</reference>
<reference key="2">
    <citation type="journal article" date="2002" name="J. Biochem.">
        <title>Structure of imidazole glycerol phosphate synthase from Thermus thermophilus HB8: open-closed conformational change and ammonia tunneling.</title>
        <authorList>
            <person name="Omi R."/>
            <person name="Mizuguchi H."/>
            <person name="Goto M."/>
            <person name="Miyahara I."/>
            <person name="Hayashi H."/>
            <person name="Kagamiyama H."/>
            <person name="Hirotsu K."/>
        </authorList>
    </citation>
    <scope>X-RAY CRYSTALLOGRAPHY (2.3 ANGSTROMS) IN COMPLEX WITH HISF</scope>
    <scope>SUBUNIT</scope>
</reference>
<comment type="function">
    <text evidence="1">IGPS catalyzes the conversion of PRFAR and glutamine to IGP, AICAR and glutamate. The HisH subunit catalyzes the hydrolysis of glutamine to glutamate and ammonia as part of the synthesis of IGP and AICAR. The resulting ammonia molecule is channeled to the active site of HisF (By similarity).</text>
</comment>
<comment type="catalytic activity">
    <reaction>
        <text>5-[(5-phospho-1-deoxy-D-ribulos-1-ylimino)methylamino]-1-(5-phospho-beta-D-ribosyl)imidazole-4-carboxamide + L-glutamine = D-erythro-1-(imidazol-4-yl)glycerol 3-phosphate + 5-amino-1-(5-phospho-beta-D-ribosyl)imidazole-4-carboxamide + L-glutamate + H(+)</text>
        <dbReference type="Rhea" id="RHEA:24793"/>
        <dbReference type="ChEBI" id="CHEBI:15378"/>
        <dbReference type="ChEBI" id="CHEBI:29985"/>
        <dbReference type="ChEBI" id="CHEBI:58278"/>
        <dbReference type="ChEBI" id="CHEBI:58359"/>
        <dbReference type="ChEBI" id="CHEBI:58475"/>
        <dbReference type="ChEBI" id="CHEBI:58525"/>
        <dbReference type="EC" id="4.3.2.10"/>
    </reaction>
</comment>
<comment type="catalytic activity">
    <reaction>
        <text>L-glutamine + H2O = L-glutamate + NH4(+)</text>
        <dbReference type="Rhea" id="RHEA:15889"/>
        <dbReference type="ChEBI" id="CHEBI:15377"/>
        <dbReference type="ChEBI" id="CHEBI:28938"/>
        <dbReference type="ChEBI" id="CHEBI:29985"/>
        <dbReference type="ChEBI" id="CHEBI:58359"/>
        <dbReference type="EC" id="3.5.1.2"/>
    </reaction>
</comment>
<comment type="pathway">
    <text>Amino-acid biosynthesis; L-histidine biosynthesis; L-histidine from 5-phospho-alpha-D-ribose 1-diphosphate: step 5/9.</text>
</comment>
<comment type="subunit">
    <text evidence="2">Heterodimer of HisH and HisF.</text>
</comment>
<comment type="subcellular location">
    <subcellularLocation>
        <location evidence="1">Cytoplasm</location>
    </subcellularLocation>
</comment>
<comment type="sequence caution" evidence="3">
    <conflict type="erroneous initiation">
        <sequence resource="EMBL-CDS" id="BAD70253"/>
    </conflict>
</comment>
<feature type="chain" id="PRO_0000152439" description="Imidazole glycerol phosphate synthase subunit HisH">
    <location>
        <begin position="1"/>
        <end position="200"/>
    </location>
</feature>
<feature type="domain" description="Glutamine amidotransferase type-1">
    <location>
        <begin position="4"/>
        <end position="200"/>
    </location>
</feature>
<feature type="active site" description="Nucleophile" evidence="3">
    <location>
        <position position="82"/>
    </location>
</feature>
<feature type="active site" evidence="3">
    <location>
        <position position="178"/>
    </location>
</feature>
<feature type="active site" evidence="3">
    <location>
        <position position="180"/>
    </location>
</feature>
<feature type="strand" evidence="4">
    <location>
        <begin position="4"/>
        <end position="8"/>
    </location>
</feature>
<feature type="helix" evidence="4">
    <location>
        <begin position="15"/>
        <end position="24"/>
    </location>
</feature>
<feature type="strand" evidence="4">
    <location>
        <begin position="28"/>
        <end position="34"/>
    </location>
</feature>
<feature type="strand" evidence="4">
    <location>
        <begin position="42"/>
        <end position="46"/>
    </location>
</feature>
<feature type="helix" evidence="4">
    <location>
        <begin position="52"/>
        <end position="57"/>
    </location>
</feature>
<feature type="strand" evidence="4">
    <location>
        <begin position="60"/>
        <end position="62"/>
    </location>
</feature>
<feature type="helix" evidence="4">
    <location>
        <begin position="65"/>
        <end position="73"/>
    </location>
</feature>
<feature type="strand" evidence="4">
    <location>
        <begin position="78"/>
        <end position="80"/>
    </location>
</feature>
<feature type="helix" evidence="4">
    <location>
        <begin position="83"/>
        <end position="86"/>
    </location>
</feature>
<feature type="strand" evidence="4">
    <location>
        <begin position="89"/>
        <end position="92"/>
    </location>
</feature>
<feature type="strand" evidence="4">
    <location>
        <begin position="103"/>
        <end position="110"/>
    </location>
</feature>
<feature type="strand" evidence="4">
    <location>
        <begin position="113"/>
        <end position="123"/>
    </location>
</feature>
<feature type="helix" evidence="4">
    <location>
        <begin position="128"/>
        <end position="133"/>
    </location>
</feature>
<feature type="strand" evidence="4">
    <location>
        <begin position="137"/>
        <end position="145"/>
    </location>
</feature>
<feature type="strand" evidence="4">
    <location>
        <begin position="154"/>
        <end position="158"/>
    </location>
</feature>
<feature type="strand" evidence="4">
    <location>
        <begin position="161"/>
        <end position="168"/>
    </location>
</feature>
<feature type="strand" evidence="4">
    <location>
        <begin position="170"/>
        <end position="177"/>
    </location>
</feature>
<feature type="helix" evidence="4">
    <location>
        <begin position="183"/>
        <end position="196"/>
    </location>
</feature>
<protein>
    <recommendedName>
        <fullName>Imidazole glycerol phosphate synthase subunit HisH</fullName>
        <ecNumber>4.3.2.10</ecNumber>
    </recommendedName>
    <alternativeName>
        <fullName>IGP synthase glutaminase subunit</fullName>
        <ecNumber>3.5.1.2</ecNumber>
    </alternativeName>
    <alternativeName>
        <fullName>IGP synthase subunit HisH</fullName>
    </alternativeName>
    <alternativeName>
        <fullName>ImGP synthase subunit HisH</fullName>
        <shortName>IGPS subunit HisH</shortName>
    </alternativeName>
</protein>